<protein>
    <recommendedName>
        <fullName>Superoxide dismutase [Mn] 3</fullName>
        <ecNumber>1.15.1.1</ecNumber>
    </recommendedName>
</protein>
<keyword id="KW-0464">Manganese</keyword>
<keyword id="KW-0479">Metal-binding</keyword>
<keyword id="KW-0560">Oxidoreductase</keyword>
<keyword id="KW-0732">Signal</keyword>
<sequence length="239" mass="26854">ASTQQTPAQSPTASPTVSTPVAYVDRPLTASPAQLPPLPYDAGALSKAIDAETMRIHHDRHHQTYVDNLNTALKDQPNLQNLSIEAMLRDLNAVPENIRNTIRNNAGGHLNHTIFWQIMSPDGGGQPTGAIAQAINQTFGNFESFRKQFNEAGGDRFGSGWVWLVRNAQGQLQIVSTANQDNPIMEGNYPIMGNDVWEHAYYLRYQNRRADYLNNWWNVVNWNEINRRFQAASQQQARS</sequence>
<accession>P50060</accession>
<dbReference type="EC" id="1.15.1.1"/>
<dbReference type="EMBL" id="U17611">
    <property type="protein sequence ID" value="AAA69953.1"/>
    <property type="molecule type" value="Genomic_DNA"/>
</dbReference>
<dbReference type="SMR" id="P50060"/>
<dbReference type="GO" id="GO:0005737">
    <property type="term" value="C:cytoplasm"/>
    <property type="evidence" value="ECO:0007669"/>
    <property type="project" value="TreeGrafter"/>
</dbReference>
<dbReference type="GO" id="GO:0046872">
    <property type="term" value="F:metal ion binding"/>
    <property type="evidence" value="ECO:0007669"/>
    <property type="project" value="UniProtKB-KW"/>
</dbReference>
<dbReference type="GO" id="GO:0004784">
    <property type="term" value="F:superoxide dismutase activity"/>
    <property type="evidence" value="ECO:0007669"/>
    <property type="project" value="UniProtKB-EC"/>
</dbReference>
<dbReference type="FunFam" id="1.10.287.990:FF:000001">
    <property type="entry name" value="Superoxide dismutase"/>
    <property type="match status" value="1"/>
</dbReference>
<dbReference type="FunFam" id="3.55.40.20:FF:000001">
    <property type="entry name" value="Superoxide dismutase"/>
    <property type="match status" value="1"/>
</dbReference>
<dbReference type="Gene3D" id="1.10.287.990">
    <property type="entry name" value="Fe,Mn superoxide dismutase (SOD) domain"/>
    <property type="match status" value="1"/>
</dbReference>
<dbReference type="Gene3D" id="3.55.40.20">
    <property type="entry name" value="Iron/manganese superoxide dismutase, C-terminal domain"/>
    <property type="match status" value="1"/>
</dbReference>
<dbReference type="InterPro" id="IPR001189">
    <property type="entry name" value="Mn/Fe_SOD"/>
</dbReference>
<dbReference type="InterPro" id="IPR019833">
    <property type="entry name" value="Mn/Fe_SOD_BS"/>
</dbReference>
<dbReference type="InterPro" id="IPR019832">
    <property type="entry name" value="Mn/Fe_SOD_C"/>
</dbReference>
<dbReference type="InterPro" id="IPR019831">
    <property type="entry name" value="Mn/Fe_SOD_N"/>
</dbReference>
<dbReference type="InterPro" id="IPR036324">
    <property type="entry name" value="Mn/Fe_SOD_N_sf"/>
</dbReference>
<dbReference type="InterPro" id="IPR036314">
    <property type="entry name" value="SOD_C_sf"/>
</dbReference>
<dbReference type="PANTHER" id="PTHR43595">
    <property type="entry name" value="37S RIBOSOMAL PROTEIN S26, MITOCHONDRIAL"/>
    <property type="match status" value="1"/>
</dbReference>
<dbReference type="PANTHER" id="PTHR43595:SF2">
    <property type="entry name" value="SMALL RIBOSOMAL SUBUNIT PROTEIN MS42"/>
    <property type="match status" value="1"/>
</dbReference>
<dbReference type="Pfam" id="PF02777">
    <property type="entry name" value="Sod_Fe_C"/>
    <property type="match status" value="1"/>
</dbReference>
<dbReference type="Pfam" id="PF00081">
    <property type="entry name" value="Sod_Fe_N"/>
    <property type="match status" value="1"/>
</dbReference>
<dbReference type="PIRSF" id="PIRSF000349">
    <property type="entry name" value="SODismutase"/>
    <property type="match status" value="1"/>
</dbReference>
<dbReference type="PRINTS" id="PR01703">
    <property type="entry name" value="MNSODISMTASE"/>
</dbReference>
<dbReference type="SUPFAM" id="SSF54719">
    <property type="entry name" value="Fe,Mn superoxide dismutase (SOD), C-terminal domain"/>
    <property type="match status" value="1"/>
</dbReference>
<dbReference type="SUPFAM" id="SSF46609">
    <property type="entry name" value="Fe,Mn superoxide dismutase (SOD), N-terminal domain"/>
    <property type="match status" value="1"/>
</dbReference>
<dbReference type="PROSITE" id="PS00088">
    <property type="entry name" value="SOD_MN"/>
    <property type="match status" value="1"/>
</dbReference>
<comment type="function">
    <text>Destroys superoxide anion radicals which are normally produced within the cells and which are toxic to biological systems.</text>
</comment>
<comment type="catalytic activity">
    <reaction>
        <text>2 superoxide + 2 H(+) = H2O2 + O2</text>
        <dbReference type="Rhea" id="RHEA:20696"/>
        <dbReference type="ChEBI" id="CHEBI:15378"/>
        <dbReference type="ChEBI" id="CHEBI:15379"/>
        <dbReference type="ChEBI" id="CHEBI:16240"/>
        <dbReference type="ChEBI" id="CHEBI:18421"/>
        <dbReference type="EC" id="1.15.1.1"/>
    </reaction>
</comment>
<comment type="cofactor">
    <cofactor evidence="1">
        <name>Mn(2+)</name>
        <dbReference type="ChEBI" id="CHEBI:29035"/>
    </cofactor>
    <text evidence="1">Binds 1 Mn(2+) ion per subunit.</text>
</comment>
<comment type="subunit">
    <text evidence="1">Homodimer.</text>
</comment>
<comment type="similarity">
    <text evidence="4">Belongs to the iron/manganese superoxide dismutase family.</text>
</comment>
<evidence type="ECO:0000250" key="1"/>
<evidence type="ECO:0000255" key="2"/>
<evidence type="ECO:0000256" key="3">
    <source>
        <dbReference type="SAM" id="MobiDB-lite"/>
    </source>
</evidence>
<evidence type="ECO:0000305" key="4"/>
<organism>
    <name type="scientific">Leptolyngbya boryana</name>
    <name type="common">Plectonema boryanum</name>
    <dbReference type="NCBI Taxonomy" id="1184"/>
    <lineage>
        <taxon>Bacteria</taxon>
        <taxon>Bacillati</taxon>
        <taxon>Cyanobacteriota</taxon>
        <taxon>Cyanophyceae</taxon>
        <taxon>Leptolyngbyales</taxon>
        <taxon>Leptolyngbyaceae</taxon>
        <taxon>Leptolyngbya group</taxon>
        <taxon>Leptolyngbya</taxon>
    </lineage>
</organism>
<reference key="1">
    <citation type="journal article" date="1995" name="J. Bacteriol.">
        <title>Characterization of four superoxide dismutase genes from a filamentous cyanobacterium.</title>
        <authorList>
            <person name="Campbell W.S."/>
            <person name="Laudenbach D.E."/>
        </authorList>
    </citation>
    <scope>NUCLEOTIDE SEQUENCE [GENOMIC DNA]</scope>
    <source>
        <strain>UTEX 485 / CCAP 1462/4</strain>
    </source>
</reference>
<name>SODM3_LEPBY</name>
<proteinExistence type="inferred from homology"/>
<feature type="signal peptide" evidence="2">
    <location>
        <begin position="1" status="less than"/>
        <end position="30"/>
    </location>
</feature>
<feature type="chain" id="PRO_0000032905" description="Superoxide dismutase [Mn] 3">
    <location>
        <begin position="31"/>
        <end position="239"/>
    </location>
</feature>
<feature type="region of interest" description="Disordered" evidence="3">
    <location>
        <begin position="1"/>
        <end position="20"/>
    </location>
</feature>
<feature type="compositionally biased region" description="Polar residues" evidence="3">
    <location>
        <begin position="1"/>
        <end position="19"/>
    </location>
</feature>
<feature type="binding site" evidence="1">
    <location>
        <position position="57"/>
    </location>
    <ligand>
        <name>Mn(2+)</name>
        <dbReference type="ChEBI" id="CHEBI:29035"/>
    </ligand>
</feature>
<feature type="binding site" evidence="1">
    <location>
        <position position="112"/>
    </location>
    <ligand>
        <name>Mn(2+)</name>
        <dbReference type="ChEBI" id="CHEBI:29035"/>
    </ligand>
</feature>
<feature type="binding site" evidence="1">
    <location>
        <position position="195"/>
    </location>
    <ligand>
        <name>Mn(2+)</name>
        <dbReference type="ChEBI" id="CHEBI:29035"/>
    </ligand>
</feature>
<feature type="binding site" evidence="1">
    <location>
        <position position="199"/>
    </location>
    <ligand>
        <name>Mn(2+)</name>
        <dbReference type="ChEBI" id="CHEBI:29035"/>
    </ligand>
</feature>
<feature type="non-terminal residue">
    <location>
        <position position="1"/>
    </location>
</feature>
<gene>
    <name type="primary">sodA3</name>
</gene>